<keyword id="KW-0067">ATP-binding</keyword>
<keyword id="KW-1003">Cell membrane</keyword>
<keyword id="KW-0406">Ion transport</keyword>
<keyword id="KW-0460">Magnesium</keyword>
<keyword id="KW-0472">Membrane</keyword>
<keyword id="KW-0479">Metal-binding</keyword>
<keyword id="KW-0547">Nucleotide-binding</keyword>
<keyword id="KW-0597">Phosphoprotein</keyword>
<keyword id="KW-0630">Potassium</keyword>
<keyword id="KW-0633">Potassium transport</keyword>
<keyword id="KW-1185">Reference proteome</keyword>
<keyword id="KW-0915">Sodium</keyword>
<keyword id="KW-0739">Sodium transport</keyword>
<keyword id="KW-0740">Sodium/potassium transport</keyword>
<keyword id="KW-1278">Translocase</keyword>
<keyword id="KW-0812">Transmembrane</keyword>
<keyword id="KW-1133">Transmembrane helix</keyword>
<keyword id="KW-0813">Transport</keyword>
<sequence>MADPGDLESRGKADSYSVAEKKSAPKKISKKNANKAKLEDLKKELEMTEHSMKLESLLSMYETSLEKGLSENIVARNLERDGLNALTPPKQTPEWVKFCKQMFGGFSMLLWIGAILCFFAFGIRAVRDTNPNMDELYLGIVLSVVVIITGCFSYYQESKSSKIMESFKKMIPQEALVLRDGKKITINAEQCVVGDVVFVKFGDRIPADIRIVECKGLKVDNSSLTGESEPQSRAVDFTHENPIETKNLAFFSTNAVEGTATGIVVRIGDNTVMGRIANLASGLGSGKTPIALEIEHFIHIVTGVAVFLGVSFLIISLAMGYHWLEAIIFLIGIIVANVPEGLLATVTVCLTLTAKKMAKKNCLVKHLEAVETLGSTSVICSDKTGTLTQNRMTVAHMWFDKMIVEADTTEDQSGIAHDKGSLTWKSLAKVAALCSRAEFKPNQNDVAVLRKECTGDASETAILKFVELSVGNVMDIRAKNKKVTEIPFNSTNKYQVSVHEQENSSGYLLVMKGAPEKVLERCSTILINGEEQPLKDDVIEIYNKAYDELGGLGERVLGFCHYYLPVDQYPKGFLFKTEEEQNFPLEGLCFLGLLSMIDPPRAAVPDAVSKCRSAGIKVIMVTGDHPITAKAIAKGVGIISEGNECEEDIALRLNIPLEDLSEDQKKSAKACVIHGAKLKDIKNEELDKILCDHTEIVFARTSPQQKLIIVEGCQRQGAIVAVTGDGVNDSPALKKADIGVAMGIAGSDVSKQAADMILLDDNFASIVTGVEEGRLIFDNLKKSIVYTLTSNIPEISPFLMFILFGIPLPLGTITILCIDLGTDMVPAISLAYEKAESDIMKRHPRNPIRDKLVNERLISLAYGQIGMMQATAGFFTYFIILAENGFLPSYLFGLRSQWDDMSNNNLLDSFGSEWTYFQRKEIELTCQTAFFTTIVVVQWADLIISKTRRLSLFQQGMTNWFLNFGLFFETALAAFLQYTPGVNTGLRLRPMNFTWWLPGLPFSLLIFVYDEIRRYLLRKNPGGWVEKETYY</sequence>
<reference key="1">
    <citation type="journal article" date="1992" name="New Biol.">
        <title>Molecular cloning and characterization of Na,K-ATPase from Hydra vulgaris: implications for enzyme evolution and ouabain sensitivity.</title>
        <authorList>
            <person name="Canfield V.A."/>
            <person name="Xu K.Y."/>
            <person name="D'Aquila T."/>
            <person name="Shyjan A.W."/>
            <person name="Levenson R."/>
        </authorList>
    </citation>
    <scope>NUCLEOTIDE SEQUENCE [MRNA]</scope>
</reference>
<feature type="chain" id="PRO_0000046308" description="Sodium/potassium-transporting ATPase subunit alpha">
    <location>
        <begin position="1"/>
        <end position="1031"/>
    </location>
</feature>
<feature type="transmembrane region" description="Helical" evidence="1">
    <location>
        <begin position="102"/>
        <end position="123"/>
    </location>
</feature>
<feature type="transmembrane region" description="Helical" evidence="1">
    <location>
        <begin position="136"/>
        <end position="155"/>
    </location>
</feature>
<feature type="transmembrane region" description="Helical" evidence="1">
    <location>
        <begin position="297"/>
        <end position="319"/>
    </location>
</feature>
<feature type="transmembrane region" description="Helical" evidence="1">
    <location>
        <begin position="326"/>
        <end position="354"/>
    </location>
</feature>
<feature type="transmembrane region" description="Helical" evidence="1">
    <location>
        <begin position="795"/>
        <end position="818"/>
    </location>
</feature>
<feature type="transmembrane region" description="Helical" evidence="1">
    <location>
        <begin position="857"/>
        <end position="882"/>
    </location>
</feature>
<feature type="transmembrane region" description="Helical" evidence="1">
    <location>
        <begin position="924"/>
        <end position="944"/>
    </location>
</feature>
<feature type="transmembrane region" description="Helical" evidence="1">
    <location>
        <begin position="961"/>
        <end position="986"/>
    </location>
</feature>
<feature type="region of interest" description="Disordered" evidence="2">
    <location>
        <begin position="1"/>
        <end position="33"/>
    </location>
</feature>
<feature type="compositionally biased region" description="Basic and acidic residues" evidence="2">
    <location>
        <begin position="7"/>
        <end position="23"/>
    </location>
</feature>
<feature type="compositionally biased region" description="Basic residues" evidence="2">
    <location>
        <begin position="24"/>
        <end position="33"/>
    </location>
</feature>
<feature type="active site" description="4-aspartylphosphate intermediate" evidence="3">
    <location>
        <position position="382"/>
    </location>
</feature>
<feature type="binding site" evidence="1">
    <location>
        <position position="512"/>
    </location>
    <ligand>
        <name>ATP</name>
        <dbReference type="ChEBI" id="CHEBI:30616"/>
    </ligand>
</feature>
<feature type="binding site" evidence="1">
    <location>
        <position position="725"/>
    </location>
    <ligand>
        <name>Mg(2+)</name>
        <dbReference type="ChEBI" id="CHEBI:18420"/>
    </ligand>
</feature>
<feature type="binding site" evidence="1">
    <location>
        <position position="729"/>
    </location>
    <ligand>
        <name>Mg(2+)</name>
        <dbReference type="ChEBI" id="CHEBI:18420"/>
    </ligand>
</feature>
<comment type="function">
    <text>This is the catalytic component of the active enzyme, which catalyzes the hydrolysis of ATP coupled with the exchange of sodium and potassium ions across the plasma membrane. This action creates the electrochemical gradient of sodium and potassium ions, providing the energy for active transport of various nutrients.</text>
</comment>
<comment type="catalytic activity">
    <reaction>
        <text>K(+)(out) + Na(+)(in) + ATP + H2O = K(+)(in) + Na(+)(out) + ADP + phosphate + H(+)</text>
        <dbReference type="Rhea" id="RHEA:18353"/>
        <dbReference type="ChEBI" id="CHEBI:15377"/>
        <dbReference type="ChEBI" id="CHEBI:15378"/>
        <dbReference type="ChEBI" id="CHEBI:29101"/>
        <dbReference type="ChEBI" id="CHEBI:29103"/>
        <dbReference type="ChEBI" id="CHEBI:30616"/>
        <dbReference type="ChEBI" id="CHEBI:43474"/>
        <dbReference type="ChEBI" id="CHEBI:456216"/>
        <dbReference type="EC" id="7.2.2.13"/>
    </reaction>
</comment>
<comment type="activity regulation">
    <text>This alpha subunit is resistant to ouabain.</text>
</comment>
<comment type="subunit">
    <text evidence="3">The sodium/potassium-transporting ATPase is composed of a catalytic alpha subunit, an auxiliary non-catalytic beta subunit and an additional regulatory subunit.</text>
</comment>
<comment type="subcellular location">
    <subcellularLocation>
        <location evidence="3">Cell membrane</location>
        <topology>Multi-pass membrane protein</topology>
    </subcellularLocation>
</comment>
<comment type="similarity">
    <text evidence="3">Belongs to the cation transport ATPase (P-type) (TC 3.A.3) family. Type IIC subfamily.</text>
</comment>
<dbReference type="EC" id="7.2.2.13"/>
<dbReference type="EMBL" id="M75140">
    <property type="protein sequence ID" value="AAA29207.1"/>
    <property type="molecule type" value="mRNA"/>
</dbReference>
<dbReference type="RefSeq" id="NP_001296716.1">
    <property type="nucleotide sequence ID" value="NM_001309787.1"/>
</dbReference>
<dbReference type="SMR" id="P35317"/>
<dbReference type="EnsemblMetazoa" id="NM_001309787.1">
    <property type="protein sequence ID" value="NP_001296716.1"/>
    <property type="gene ID" value="LOC105846521"/>
</dbReference>
<dbReference type="GeneID" id="105846521"/>
<dbReference type="KEGG" id="hmg:105846521"/>
<dbReference type="OrthoDB" id="3352408at2759"/>
<dbReference type="Proteomes" id="UP000694840">
    <property type="component" value="Unplaced"/>
</dbReference>
<dbReference type="GO" id="GO:0005886">
    <property type="term" value="C:plasma membrane"/>
    <property type="evidence" value="ECO:0007669"/>
    <property type="project" value="UniProtKB-SubCell"/>
</dbReference>
<dbReference type="GO" id="GO:0005524">
    <property type="term" value="F:ATP binding"/>
    <property type="evidence" value="ECO:0007669"/>
    <property type="project" value="UniProtKB-KW"/>
</dbReference>
<dbReference type="GO" id="GO:0016887">
    <property type="term" value="F:ATP hydrolysis activity"/>
    <property type="evidence" value="ECO:0007669"/>
    <property type="project" value="InterPro"/>
</dbReference>
<dbReference type="GO" id="GO:0046872">
    <property type="term" value="F:metal ion binding"/>
    <property type="evidence" value="ECO:0007669"/>
    <property type="project" value="UniProtKB-KW"/>
</dbReference>
<dbReference type="GO" id="GO:0005391">
    <property type="term" value="F:P-type sodium:potassium-exchanging transporter activity"/>
    <property type="evidence" value="ECO:0007669"/>
    <property type="project" value="UniProtKB-EC"/>
</dbReference>
<dbReference type="GO" id="GO:0030007">
    <property type="term" value="P:intracellular potassium ion homeostasis"/>
    <property type="evidence" value="ECO:0007669"/>
    <property type="project" value="TreeGrafter"/>
</dbReference>
<dbReference type="GO" id="GO:0006883">
    <property type="term" value="P:intracellular sodium ion homeostasis"/>
    <property type="evidence" value="ECO:0007669"/>
    <property type="project" value="TreeGrafter"/>
</dbReference>
<dbReference type="GO" id="GO:1990573">
    <property type="term" value="P:potassium ion import across plasma membrane"/>
    <property type="evidence" value="ECO:0007669"/>
    <property type="project" value="TreeGrafter"/>
</dbReference>
<dbReference type="GO" id="GO:1902600">
    <property type="term" value="P:proton transmembrane transport"/>
    <property type="evidence" value="ECO:0007669"/>
    <property type="project" value="TreeGrafter"/>
</dbReference>
<dbReference type="GO" id="GO:0036376">
    <property type="term" value="P:sodium ion export across plasma membrane"/>
    <property type="evidence" value="ECO:0007669"/>
    <property type="project" value="TreeGrafter"/>
</dbReference>
<dbReference type="CDD" id="cd02608">
    <property type="entry name" value="P-type_ATPase_Na-K_like"/>
    <property type="match status" value="1"/>
</dbReference>
<dbReference type="FunFam" id="3.40.50.1000:FF:000001">
    <property type="entry name" value="Phospholipid-transporting ATPase IC"/>
    <property type="match status" value="1"/>
</dbReference>
<dbReference type="FunFam" id="2.70.150.10:FF:000003">
    <property type="entry name" value="Sodium/potassium-transporting ATPase subunit alpha"/>
    <property type="match status" value="1"/>
</dbReference>
<dbReference type="FunFam" id="3.40.1110.10:FF:000001">
    <property type="entry name" value="Sodium/potassium-transporting ATPase subunit alpha"/>
    <property type="match status" value="1"/>
</dbReference>
<dbReference type="FunFam" id="3.40.50.1000:FF:000004">
    <property type="entry name" value="Sodium/potassium-transporting ATPase subunit alpha"/>
    <property type="match status" value="1"/>
</dbReference>
<dbReference type="FunFam" id="1.20.1110.10:FF:000095">
    <property type="entry name" value="Sodium/potassium-transporting ATPase subunit alpha-1"/>
    <property type="match status" value="2"/>
</dbReference>
<dbReference type="Gene3D" id="3.40.1110.10">
    <property type="entry name" value="Calcium-transporting ATPase, cytoplasmic domain N"/>
    <property type="match status" value="1"/>
</dbReference>
<dbReference type="Gene3D" id="2.70.150.10">
    <property type="entry name" value="Calcium-transporting ATPase, cytoplasmic transduction domain A"/>
    <property type="match status" value="1"/>
</dbReference>
<dbReference type="Gene3D" id="1.20.1110.10">
    <property type="entry name" value="Calcium-transporting ATPase, transmembrane domain"/>
    <property type="match status" value="1"/>
</dbReference>
<dbReference type="Gene3D" id="3.40.50.1000">
    <property type="entry name" value="HAD superfamily/HAD-like"/>
    <property type="match status" value="1"/>
</dbReference>
<dbReference type="InterPro" id="IPR006068">
    <property type="entry name" value="ATPase_P-typ_cation-transptr_C"/>
</dbReference>
<dbReference type="InterPro" id="IPR004014">
    <property type="entry name" value="ATPase_P-typ_cation-transptr_N"/>
</dbReference>
<dbReference type="InterPro" id="IPR023299">
    <property type="entry name" value="ATPase_P-typ_cyto_dom_N"/>
</dbReference>
<dbReference type="InterPro" id="IPR018303">
    <property type="entry name" value="ATPase_P-typ_P_site"/>
</dbReference>
<dbReference type="InterPro" id="IPR023298">
    <property type="entry name" value="ATPase_P-typ_TM_dom_sf"/>
</dbReference>
<dbReference type="InterPro" id="IPR008250">
    <property type="entry name" value="ATPase_P-typ_transduc_dom_A_sf"/>
</dbReference>
<dbReference type="InterPro" id="IPR050510">
    <property type="entry name" value="Cation_transp_ATPase_P-type"/>
</dbReference>
<dbReference type="InterPro" id="IPR036412">
    <property type="entry name" value="HAD-like_sf"/>
</dbReference>
<dbReference type="InterPro" id="IPR023214">
    <property type="entry name" value="HAD_sf"/>
</dbReference>
<dbReference type="InterPro" id="IPR005775">
    <property type="entry name" value="P-type_ATPase_IIC"/>
</dbReference>
<dbReference type="InterPro" id="IPR001757">
    <property type="entry name" value="P_typ_ATPase"/>
</dbReference>
<dbReference type="InterPro" id="IPR044492">
    <property type="entry name" value="P_typ_ATPase_HD_dom"/>
</dbReference>
<dbReference type="NCBIfam" id="TIGR01106">
    <property type="entry name" value="ATPase-IIC_X-K"/>
    <property type="match status" value="1"/>
</dbReference>
<dbReference type="NCBIfam" id="TIGR01494">
    <property type="entry name" value="ATPase_P-type"/>
    <property type="match status" value="2"/>
</dbReference>
<dbReference type="PANTHER" id="PTHR43294">
    <property type="entry name" value="SODIUM/POTASSIUM-TRANSPORTING ATPASE SUBUNIT ALPHA"/>
    <property type="match status" value="1"/>
</dbReference>
<dbReference type="PANTHER" id="PTHR43294:SF13">
    <property type="entry name" value="SODIUM_POTASSIUM-TRANSPORTING ATPASE SUBUNIT ALPHA"/>
    <property type="match status" value="1"/>
</dbReference>
<dbReference type="Pfam" id="PF13246">
    <property type="entry name" value="Cation_ATPase"/>
    <property type="match status" value="1"/>
</dbReference>
<dbReference type="Pfam" id="PF00689">
    <property type="entry name" value="Cation_ATPase_C"/>
    <property type="match status" value="1"/>
</dbReference>
<dbReference type="Pfam" id="PF00690">
    <property type="entry name" value="Cation_ATPase_N"/>
    <property type="match status" value="1"/>
</dbReference>
<dbReference type="Pfam" id="PF00122">
    <property type="entry name" value="E1-E2_ATPase"/>
    <property type="match status" value="1"/>
</dbReference>
<dbReference type="Pfam" id="PF00702">
    <property type="entry name" value="Hydrolase"/>
    <property type="match status" value="1"/>
</dbReference>
<dbReference type="PRINTS" id="PR00119">
    <property type="entry name" value="CATATPASE"/>
</dbReference>
<dbReference type="PRINTS" id="PR00121">
    <property type="entry name" value="NAKATPASE"/>
</dbReference>
<dbReference type="SFLD" id="SFLDG00002">
    <property type="entry name" value="C1.7:_P-type_atpase_like"/>
    <property type="match status" value="1"/>
</dbReference>
<dbReference type="SFLD" id="SFLDF00027">
    <property type="entry name" value="p-type_atpase"/>
    <property type="match status" value="1"/>
</dbReference>
<dbReference type="SMART" id="SM00831">
    <property type="entry name" value="Cation_ATPase_N"/>
    <property type="match status" value="1"/>
</dbReference>
<dbReference type="SUPFAM" id="SSF81653">
    <property type="entry name" value="Calcium ATPase, transduction domain A"/>
    <property type="match status" value="1"/>
</dbReference>
<dbReference type="SUPFAM" id="SSF81665">
    <property type="entry name" value="Calcium ATPase, transmembrane domain M"/>
    <property type="match status" value="1"/>
</dbReference>
<dbReference type="SUPFAM" id="SSF56784">
    <property type="entry name" value="HAD-like"/>
    <property type="match status" value="1"/>
</dbReference>
<dbReference type="SUPFAM" id="SSF81660">
    <property type="entry name" value="Metal cation-transporting ATPase, ATP-binding domain N"/>
    <property type="match status" value="1"/>
</dbReference>
<dbReference type="PROSITE" id="PS00154">
    <property type="entry name" value="ATPASE_E1_E2"/>
    <property type="match status" value="1"/>
</dbReference>
<evidence type="ECO:0000250" key="1"/>
<evidence type="ECO:0000256" key="2">
    <source>
        <dbReference type="SAM" id="MobiDB-lite"/>
    </source>
</evidence>
<evidence type="ECO:0000305" key="3"/>
<organism>
    <name type="scientific">Hydra vulgaris</name>
    <name type="common">Hydra</name>
    <name type="synonym">Hydra attenuata</name>
    <dbReference type="NCBI Taxonomy" id="6087"/>
    <lineage>
        <taxon>Eukaryota</taxon>
        <taxon>Metazoa</taxon>
        <taxon>Cnidaria</taxon>
        <taxon>Hydrozoa</taxon>
        <taxon>Hydroidolina</taxon>
        <taxon>Anthoathecata</taxon>
        <taxon>Aplanulata</taxon>
        <taxon>Hydridae</taxon>
        <taxon>Hydra</taxon>
    </lineage>
</organism>
<protein>
    <recommendedName>
        <fullName>Sodium/potassium-transporting ATPase subunit alpha</fullName>
        <shortName>Na(+)/K(+) ATPase alpha subunit</shortName>
        <ecNumber>7.2.2.13</ecNumber>
    </recommendedName>
    <alternativeName>
        <fullName>Sodium pump subunit alpha</fullName>
    </alternativeName>
</protein>
<accession>P35317</accession>
<proteinExistence type="evidence at transcript level"/>
<name>AT1A_HYDVU</name>